<accession>Q08354</accession>
<sequence length="453" mass="47901">MQLSNSLRSARSAAASSGCALASRPVVACRRVTPSVTRPGPFTIATGPLLPASRSKAGGGIRVFSSALYEFGQQLKEDLDHDLSRARVDAIANKTRIAELEQQRRILMAVGGMADDEPELKAALMQLEEILGVSFNELQLMLAETLADHPAKMDNLAAMAAVVGTGSDGGGDESGDRDTADAADADGDGGERAWLRFKADVHACLADLRNRKDGITLHRAIVKDMVRASSNPGARRSSSSVDKMARQELDRLMPFLLDDFLDKMPGLKAAFTGKAEPGAEGDDGEGEEEGEAQDVGEDAVDSSSSGGGGGVLSCAAWQQVLGRTVRAVSPTLALVLARGYLAMAPRQYRALALVRMILPGKTGGGVDGALTRKEGLSLLKKLRPGISGLADKDKQWLEWVIARLAAEFAVQSAGDGHEPEPKRPELPPTAVQRKPPAEEQHKPTAGARDSPNM</sequence>
<proteinExistence type="evidence at transcript level"/>
<protein>
    <recommendedName>
        <fullName>Ezy-1 protein</fullName>
    </recommendedName>
</protein>
<feature type="signal peptide" evidence="1">
    <location>
        <begin position="1"/>
        <end position="28"/>
    </location>
</feature>
<feature type="chain" id="PRO_0000021220" description="Ezy-1 protein">
    <location>
        <begin position="29"/>
        <end position="453"/>
    </location>
</feature>
<feature type="region of interest" description="Disordered" evidence="2">
    <location>
        <begin position="167"/>
        <end position="187"/>
    </location>
</feature>
<feature type="region of interest" description="Disordered" evidence="2">
    <location>
        <begin position="272"/>
        <end position="307"/>
    </location>
</feature>
<feature type="region of interest" description="Disordered" evidence="2">
    <location>
        <begin position="412"/>
        <end position="453"/>
    </location>
</feature>
<feature type="compositionally biased region" description="Acidic residues" evidence="2">
    <location>
        <begin position="279"/>
        <end position="300"/>
    </location>
</feature>
<feature type="compositionally biased region" description="Basic and acidic residues" evidence="2">
    <location>
        <begin position="415"/>
        <end position="425"/>
    </location>
</feature>
<organism>
    <name type="scientific">Chlamydomonas reinhardtii</name>
    <name type="common">Chlamydomonas smithii</name>
    <dbReference type="NCBI Taxonomy" id="3055"/>
    <lineage>
        <taxon>Eukaryota</taxon>
        <taxon>Viridiplantae</taxon>
        <taxon>Chlorophyta</taxon>
        <taxon>core chlorophytes</taxon>
        <taxon>Chlorophyceae</taxon>
        <taxon>CS clade</taxon>
        <taxon>Chlamydomonadales</taxon>
        <taxon>Chlamydomonadaceae</taxon>
        <taxon>Chlamydomonas</taxon>
    </lineage>
</organism>
<dbReference type="EMBL" id="L20945">
    <property type="protein sequence ID" value="AAC37349.1"/>
    <property type="molecule type" value="mRNA"/>
</dbReference>
<dbReference type="PIR" id="B48210">
    <property type="entry name" value="B48210"/>
</dbReference>
<dbReference type="PaxDb" id="3055-EDP08350"/>
<evidence type="ECO:0000255" key="1"/>
<evidence type="ECO:0000256" key="2">
    <source>
        <dbReference type="SAM" id="MobiDB-lite"/>
    </source>
</evidence>
<gene>
    <name type="primary">Ezy-1</name>
</gene>
<name>EZY1_CHLRE</name>
<reference key="1">
    <citation type="journal article" date="1993" name="Cell">
        <title>A mating type-linked gene cluster expressed in Chlamydomonas zygotes participates in the uniparental inheritance of the chloroplast genome.</title>
        <authorList>
            <person name="Armbrust E.V."/>
            <person name="Ferris P.J."/>
            <person name="Goodenough U.W."/>
        </authorList>
    </citation>
    <scope>NUCLEOTIDE SEQUENCE [MRNA]</scope>
</reference>
<keyword id="KW-0732">Signal</keyword>